<accession>A2YS76</accession>
<name>STAD7_ORYSI</name>
<feature type="transit peptide" description="Chloroplast" evidence="2">
    <location>
        <begin position="1"/>
        <end position="39"/>
    </location>
</feature>
<feature type="chain" id="PRO_0000401437" description="Acyl-[acyl-carrier-protein] desaturase 7, chloroplastic">
    <location>
        <begin position="40"/>
        <end position="404"/>
    </location>
</feature>
<feature type="binding site" evidence="1">
    <location>
        <position position="138"/>
    </location>
    <ligand>
        <name>Fe cation</name>
        <dbReference type="ChEBI" id="CHEBI:24875"/>
        <label>1</label>
    </ligand>
</feature>
<feature type="binding site" evidence="1">
    <location>
        <position position="176"/>
    </location>
    <ligand>
        <name>Fe cation</name>
        <dbReference type="ChEBI" id="CHEBI:24875"/>
        <label>1</label>
    </ligand>
</feature>
<feature type="binding site" evidence="1">
    <location>
        <position position="176"/>
    </location>
    <ligand>
        <name>Fe cation</name>
        <dbReference type="ChEBI" id="CHEBI:24875"/>
        <label>2</label>
    </ligand>
</feature>
<feature type="binding site" evidence="1">
    <location>
        <position position="179"/>
    </location>
    <ligand>
        <name>Fe cation</name>
        <dbReference type="ChEBI" id="CHEBI:24875"/>
        <label>1</label>
    </ligand>
</feature>
<feature type="binding site" evidence="1">
    <location>
        <position position="229"/>
    </location>
    <ligand>
        <name>Fe cation</name>
        <dbReference type="ChEBI" id="CHEBI:24875"/>
        <label>2</label>
    </ligand>
</feature>
<feature type="binding site" evidence="1">
    <location>
        <position position="262"/>
    </location>
    <ligand>
        <name>Fe cation</name>
        <dbReference type="ChEBI" id="CHEBI:24875"/>
        <label>1</label>
    </ligand>
</feature>
<feature type="binding site" evidence="1">
    <location>
        <position position="262"/>
    </location>
    <ligand>
        <name>Fe cation</name>
        <dbReference type="ChEBI" id="CHEBI:24875"/>
        <label>2</label>
    </ligand>
</feature>
<feature type="binding site" evidence="1">
    <location>
        <position position="265"/>
    </location>
    <ligand>
        <name>Fe cation</name>
        <dbReference type="ChEBI" id="CHEBI:24875"/>
        <label>2</label>
    </ligand>
</feature>
<gene>
    <name type="ORF">OsI_28174</name>
</gene>
<organism>
    <name type="scientific">Oryza sativa subsp. indica</name>
    <name type="common">Rice</name>
    <dbReference type="NCBI Taxonomy" id="39946"/>
    <lineage>
        <taxon>Eukaryota</taxon>
        <taxon>Viridiplantae</taxon>
        <taxon>Streptophyta</taxon>
        <taxon>Embryophyta</taxon>
        <taxon>Tracheophyta</taxon>
        <taxon>Spermatophyta</taxon>
        <taxon>Magnoliopsida</taxon>
        <taxon>Liliopsida</taxon>
        <taxon>Poales</taxon>
        <taxon>Poaceae</taxon>
        <taxon>BOP clade</taxon>
        <taxon>Oryzoideae</taxon>
        <taxon>Oryzeae</taxon>
        <taxon>Oryzinae</taxon>
        <taxon>Oryza</taxon>
        <taxon>Oryza sativa</taxon>
    </lineage>
</organism>
<reference key="1">
    <citation type="journal article" date="2005" name="PLoS Biol.">
        <title>The genomes of Oryza sativa: a history of duplications.</title>
        <authorList>
            <person name="Yu J."/>
            <person name="Wang J."/>
            <person name="Lin W."/>
            <person name="Li S."/>
            <person name="Li H."/>
            <person name="Zhou J."/>
            <person name="Ni P."/>
            <person name="Dong W."/>
            <person name="Hu S."/>
            <person name="Zeng C."/>
            <person name="Zhang J."/>
            <person name="Zhang Y."/>
            <person name="Li R."/>
            <person name="Xu Z."/>
            <person name="Li S."/>
            <person name="Li X."/>
            <person name="Zheng H."/>
            <person name="Cong L."/>
            <person name="Lin L."/>
            <person name="Yin J."/>
            <person name="Geng J."/>
            <person name="Li G."/>
            <person name="Shi J."/>
            <person name="Liu J."/>
            <person name="Lv H."/>
            <person name="Li J."/>
            <person name="Wang J."/>
            <person name="Deng Y."/>
            <person name="Ran L."/>
            <person name="Shi X."/>
            <person name="Wang X."/>
            <person name="Wu Q."/>
            <person name="Li C."/>
            <person name="Ren X."/>
            <person name="Wang J."/>
            <person name="Wang X."/>
            <person name="Li D."/>
            <person name="Liu D."/>
            <person name="Zhang X."/>
            <person name="Ji Z."/>
            <person name="Zhao W."/>
            <person name="Sun Y."/>
            <person name="Zhang Z."/>
            <person name="Bao J."/>
            <person name="Han Y."/>
            <person name="Dong L."/>
            <person name="Ji J."/>
            <person name="Chen P."/>
            <person name="Wu S."/>
            <person name="Liu J."/>
            <person name="Xiao Y."/>
            <person name="Bu D."/>
            <person name="Tan J."/>
            <person name="Yang L."/>
            <person name="Ye C."/>
            <person name="Zhang J."/>
            <person name="Xu J."/>
            <person name="Zhou Y."/>
            <person name="Yu Y."/>
            <person name="Zhang B."/>
            <person name="Zhuang S."/>
            <person name="Wei H."/>
            <person name="Liu B."/>
            <person name="Lei M."/>
            <person name="Yu H."/>
            <person name="Li Y."/>
            <person name="Xu H."/>
            <person name="Wei S."/>
            <person name="He X."/>
            <person name="Fang L."/>
            <person name="Zhang Z."/>
            <person name="Zhang Y."/>
            <person name="Huang X."/>
            <person name="Su Z."/>
            <person name="Tong W."/>
            <person name="Li J."/>
            <person name="Tong Z."/>
            <person name="Li S."/>
            <person name="Ye J."/>
            <person name="Wang L."/>
            <person name="Fang L."/>
            <person name="Lei T."/>
            <person name="Chen C.-S."/>
            <person name="Chen H.-C."/>
            <person name="Xu Z."/>
            <person name="Li H."/>
            <person name="Huang H."/>
            <person name="Zhang F."/>
            <person name="Xu H."/>
            <person name="Li N."/>
            <person name="Zhao C."/>
            <person name="Li S."/>
            <person name="Dong L."/>
            <person name="Huang Y."/>
            <person name="Li L."/>
            <person name="Xi Y."/>
            <person name="Qi Q."/>
            <person name="Li W."/>
            <person name="Zhang B."/>
            <person name="Hu W."/>
            <person name="Zhang Y."/>
            <person name="Tian X."/>
            <person name="Jiao Y."/>
            <person name="Liang X."/>
            <person name="Jin J."/>
            <person name="Gao L."/>
            <person name="Zheng W."/>
            <person name="Hao B."/>
            <person name="Liu S.-M."/>
            <person name="Wang W."/>
            <person name="Yuan L."/>
            <person name="Cao M."/>
            <person name="McDermott J."/>
            <person name="Samudrala R."/>
            <person name="Wang J."/>
            <person name="Wong G.K.-S."/>
            <person name="Yang H."/>
        </authorList>
    </citation>
    <scope>NUCLEOTIDE SEQUENCE [LARGE SCALE GENOMIC DNA]</scope>
    <source>
        <strain>cv. 93-11</strain>
    </source>
</reference>
<protein>
    <recommendedName>
        <fullName>Acyl-[acyl-carrier-protein] desaturase 7, chloroplastic</fullName>
        <ecNumber>1.14.19.-</ecNumber>
    </recommendedName>
</protein>
<comment type="function">
    <text evidence="3">Introduces a cis double bond in the acyl chain of an acyl-[acyl-carrier protein].</text>
</comment>
<comment type="cofactor">
    <cofactor evidence="1">
        <name>Fe(2+)</name>
        <dbReference type="ChEBI" id="CHEBI:29033"/>
    </cofactor>
    <text evidence="1">Binds 2 Fe(2+) ions per subunit.</text>
</comment>
<comment type="pathway">
    <text>Lipid metabolism; fatty acid metabolism.</text>
</comment>
<comment type="subunit">
    <text evidence="1">Homodimer.</text>
</comment>
<comment type="subcellular location">
    <subcellularLocation>
        <location evidence="3">Plastid</location>
        <location evidence="3">Chloroplast</location>
    </subcellularLocation>
</comment>
<comment type="similarity">
    <text evidence="3">Belongs to the fatty acid desaturase type 2 family.</text>
</comment>
<proteinExistence type="inferred from homology"/>
<evidence type="ECO:0000250" key="1">
    <source>
        <dbReference type="UniProtKB" id="P22337"/>
    </source>
</evidence>
<evidence type="ECO:0000255" key="2"/>
<evidence type="ECO:0000305" key="3"/>
<dbReference type="EC" id="1.14.19.-"/>
<dbReference type="EMBL" id="CM000133">
    <property type="protein sequence ID" value="EAZ05937.1"/>
    <property type="molecule type" value="Genomic_DNA"/>
</dbReference>
<dbReference type="SMR" id="A2YS76"/>
<dbReference type="STRING" id="39946.A2YS76"/>
<dbReference type="EnsemblPlants" id="BGIOSGA027484-TA">
    <property type="protein sequence ID" value="BGIOSGA027484-PA"/>
    <property type="gene ID" value="BGIOSGA027484"/>
</dbReference>
<dbReference type="Gramene" id="BGIOSGA027484-TA">
    <property type="protein sequence ID" value="BGIOSGA027484-PA"/>
    <property type="gene ID" value="BGIOSGA027484"/>
</dbReference>
<dbReference type="HOGENOM" id="CLU_034505_1_0_1"/>
<dbReference type="OMA" id="MMRHRIT"/>
<dbReference type="UniPathway" id="UPA00199"/>
<dbReference type="Proteomes" id="UP000007015">
    <property type="component" value="Chromosome 8"/>
</dbReference>
<dbReference type="GO" id="GO:0009570">
    <property type="term" value="C:chloroplast stroma"/>
    <property type="evidence" value="ECO:0007669"/>
    <property type="project" value="TreeGrafter"/>
</dbReference>
<dbReference type="GO" id="GO:0046872">
    <property type="term" value="F:metal ion binding"/>
    <property type="evidence" value="ECO:0007669"/>
    <property type="project" value="UniProtKB-KW"/>
</dbReference>
<dbReference type="GO" id="GO:0045300">
    <property type="term" value="F:stearoyl-[ACP] desaturase activity"/>
    <property type="evidence" value="ECO:0007669"/>
    <property type="project" value="InterPro"/>
</dbReference>
<dbReference type="GO" id="GO:0006633">
    <property type="term" value="P:fatty acid biosynthetic process"/>
    <property type="evidence" value="ECO:0007669"/>
    <property type="project" value="UniProtKB-KW"/>
</dbReference>
<dbReference type="CDD" id="cd01050">
    <property type="entry name" value="Acyl_ACP_Desat"/>
    <property type="match status" value="1"/>
</dbReference>
<dbReference type="FunFam" id="1.10.620.20:FF:000002">
    <property type="entry name" value="Stearoyl-[acyl-carrier-protein] 9-desaturase, chloroplastic"/>
    <property type="match status" value="1"/>
</dbReference>
<dbReference type="Gene3D" id="1.10.620.20">
    <property type="entry name" value="Ribonucleotide Reductase, subunit A"/>
    <property type="match status" value="1"/>
</dbReference>
<dbReference type="InterPro" id="IPR005067">
    <property type="entry name" value="Fatty_acid_desaturase-2"/>
</dbReference>
<dbReference type="InterPro" id="IPR009078">
    <property type="entry name" value="Ferritin-like_SF"/>
</dbReference>
<dbReference type="InterPro" id="IPR012348">
    <property type="entry name" value="RNR-like"/>
</dbReference>
<dbReference type="PANTHER" id="PTHR31155">
    <property type="entry name" value="ACYL- ACYL-CARRIER-PROTEIN DESATURASE-RELATED"/>
    <property type="match status" value="1"/>
</dbReference>
<dbReference type="PANTHER" id="PTHR31155:SF40">
    <property type="entry name" value="ACYL-[ACYL-CARRIER-PROTEIN] DESATURASE 7, CHLOROPLASTIC"/>
    <property type="match status" value="1"/>
</dbReference>
<dbReference type="Pfam" id="PF03405">
    <property type="entry name" value="FA_desaturase_2"/>
    <property type="match status" value="1"/>
</dbReference>
<dbReference type="PIRSF" id="PIRSF000346">
    <property type="entry name" value="Dlt9_acylACP_des"/>
    <property type="match status" value="1"/>
</dbReference>
<dbReference type="SUPFAM" id="SSF47240">
    <property type="entry name" value="Ferritin-like"/>
    <property type="match status" value="1"/>
</dbReference>
<keyword id="KW-0150">Chloroplast</keyword>
<keyword id="KW-0275">Fatty acid biosynthesis</keyword>
<keyword id="KW-0276">Fatty acid metabolism</keyword>
<keyword id="KW-0408">Iron</keyword>
<keyword id="KW-0444">Lipid biosynthesis</keyword>
<keyword id="KW-0443">Lipid metabolism</keyword>
<keyword id="KW-0479">Metal-binding</keyword>
<keyword id="KW-0560">Oxidoreductase</keyword>
<keyword id="KW-0934">Plastid</keyword>
<keyword id="KW-1185">Reference proteome</keyword>
<keyword id="KW-0809">Transit peptide</keyword>
<sequence>MAASATTSTLAVTMFGYPNRNCHLKPPATATLRFWRSAAAAAVATSRREAEAEEADEVRRCLAPARLEVLEQMEPWVEAHVLPLLKPAEEAWQPADLVPDAAALGADGFHAACVELRGRAAGVPDAHLVCLVGNMVTEEALPTYQSMANRFESARDVTGADATAWARWIRGWSAEENRHGDVLNRYMYLSGRLDMRQVERTVHRLIGSGMAMHAPASPYHGFIYVAFQERATAISHGNTARNVRAHGDDALARICGAIASDEKRHEAAYTRVVERLLEADPDTTVRALAYMMRRRITMPAALMDDGRDADLFAHYAAAAQQAGTYTASDYRGILEHLIRRWRVAELEAGLSGEGRRARDYVCALPQKIRRMEEKAHDRAAQMRKRPTAIPFSWIFDKPVDLMLP</sequence>